<accession>Q2G0N1</accession>
<evidence type="ECO:0000250" key="1"/>
<evidence type="ECO:0000255" key="2">
    <source>
        <dbReference type="HAMAP-Rule" id="MF_00054"/>
    </source>
</evidence>
<evidence type="ECO:0007829" key="3">
    <source>
        <dbReference type="PDB" id="2MZW"/>
    </source>
</evidence>
<protein>
    <recommendedName>
        <fullName evidence="2">Elongation factor G</fullName>
        <shortName evidence="2">EF-G</shortName>
    </recommendedName>
</protein>
<proteinExistence type="evidence at protein level"/>
<comment type="function">
    <text evidence="2">Catalyzes the GTP-dependent ribosomal translocation step during translation elongation. During this step, the ribosome changes from the pre-translocational (PRE) to the post-translocational (POST) state as the newly formed A-site-bound peptidyl-tRNA and P-site-bound deacylated tRNA move to the P and E sites, respectively. Catalyzes the coordinated movement of the two tRNA molecules, the mRNA and conformational changes in the ribosome.</text>
</comment>
<comment type="interaction">
    <interactant intactId="EBI-16223558">
        <id>Q2G0N1</id>
    </interactant>
    <interactant intactId="EBI-16223542">
        <id>Q8GNY5</id>
        <label>far1</label>
    </interactant>
    <organismsDiffer>true</organismsDiffer>
    <experiments>3</experiments>
</comment>
<comment type="subcellular location">
    <subcellularLocation>
        <location evidence="2">Cytoplasm</location>
    </subcellularLocation>
</comment>
<comment type="similarity">
    <text evidence="2">Belongs to the TRAFAC class translation factor GTPase superfamily. Classic translation factor GTPase family. EF-G/EF-2 subfamily.</text>
</comment>
<organism>
    <name type="scientific">Staphylococcus aureus (strain NCTC 8325 / PS 47)</name>
    <dbReference type="NCBI Taxonomy" id="93061"/>
    <lineage>
        <taxon>Bacteria</taxon>
        <taxon>Bacillati</taxon>
        <taxon>Bacillota</taxon>
        <taxon>Bacilli</taxon>
        <taxon>Bacillales</taxon>
        <taxon>Staphylococcaceae</taxon>
        <taxon>Staphylococcus</taxon>
    </lineage>
</organism>
<reference key="1">
    <citation type="book" date="2006" name="Gram positive pathogens, 2nd edition">
        <title>The Staphylococcus aureus NCTC 8325 genome.</title>
        <editorList>
            <person name="Fischetti V."/>
            <person name="Novick R."/>
            <person name="Ferretti J."/>
            <person name="Portnoy D."/>
            <person name="Rood J."/>
        </editorList>
        <authorList>
            <person name="Gillaspy A.F."/>
            <person name="Worrell V."/>
            <person name="Orvis J."/>
            <person name="Roe B.A."/>
            <person name="Dyer D.W."/>
            <person name="Iandolo J.J."/>
        </authorList>
    </citation>
    <scope>NUCLEOTIDE SEQUENCE [LARGE SCALE GENOMIC DNA]</scope>
    <source>
        <strain>NCTC 8325 / PS 47</strain>
    </source>
</reference>
<feature type="initiator methionine" description="Removed" evidence="1">
    <location>
        <position position="1"/>
    </location>
</feature>
<feature type="chain" id="PRO_0000263515" description="Elongation factor G">
    <location>
        <begin position="2"/>
        <end position="693"/>
    </location>
</feature>
<feature type="domain" description="tr-type G">
    <location>
        <begin position="8"/>
        <end position="282"/>
    </location>
</feature>
<feature type="binding site" evidence="2">
    <location>
        <begin position="17"/>
        <end position="24"/>
    </location>
    <ligand>
        <name>GTP</name>
        <dbReference type="ChEBI" id="CHEBI:37565"/>
    </ligand>
</feature>
<feature type="binding site" evidence="2">
    <location>
        <begin position="81"/>
        <end position="85"/>
    </location>
    <ligand>
        <name>GTP</name>
        <dbReference type="ChEBI" id="CHEBI:37565"/>
    </ligand>
</feature>
<feature type="binding site" evidence="2">
    <location>
        <begin position="135"/>
        <end position="138"/>
    </location>
    <ligand>
        <name>GTP</name>
        <dbReference type="ChEBI" id="CHEBI:37565"/>
    </ligand>
</feature>
<feature type="strand" evidence="3">
    <location>
        <begin position="407"/>
        <end position="416"/>
    </location>
</feature>
<feature type="helix" evidence="3">
    <location>
        <begin position="417"/>
        <end position="433"/>
    </location>
</feature>
<feature type="strand" evidence="3">
    <location>
        <begin position="437"/>
        <end position="441"/>
    </location>
</feature>
<feature type="strand" evidence="3">
    <location>
        <begin position="447"/>
        <end position="454"/>
    </location>
</feature>
<feature type="helix" evidence="3">
    <location>
        <begin position="455"/>
        <end position="468"/>
    </location>
</feature>
<feature type="strand" evidence="3">
    <location>
        <begin position="473"/>
        <end position="476"/>
    </location>
</feature>
<feature type="strand" evidence="3">
    <location>
        <begin position="490"/>
        <end position="498"/>
    </location>
</feature>
<feature type="strand" evidence="3">
    <location>
        <begin position="500"/>
        <end position="503"/>
    </location>
</feature>
<feature type="strand" evidence="3">
    <location>
        <begin position="505"/>
        <end position="514"/>
    </location>
</feature>
<feature type="strand" evidence="3">
    <location>
        <begin position="523"/>
        <end position="526"/>
    </location>
</feature>
<feature type="helix" evidence="3">
    <location>
        <begin position="535"/>
        <end position="537"/>
    </location>
</feature>
<feature type="helix" evidence="3">
    <location>
        <begin position="538"/>
        <end position="549"/>
    </location>
</feature>
<feature type="turn" evidence="3">
    <location>
        <begin position="550"/>
        <end position="552"/>
    </location>
</feature>
<feature type="strand" evidence="3">
    <location>
        <begin position="563"/>
        <end position="570"/>
    </location>
</feature>
<feature type="helix" evidence="3">
    <location>
        <begin position="578"/>
        <end position="596"/>
    </location>
</feature>
<feature type="strand" evidence="3">
    <location>
        <begin position="604"/>
        <end position="612"/>
    </location>
</feature>
<feature type="helix" evidence="3">
    <location>
        <begin position="616"/>
        <end position="624"/>
    </location>
</feature>
<feature type="turn" evidence="3">
    <location>
        <begin position="625"/>
        <end position="627"/>
    </location>
</feature>
<feature type="strand" evidence="3">
    <location>
        <begin position="634"/>
        <end position="636"/>
    </location>
</feature>
<feature type="strand" evidence="3">
    <location>
        <begin position="639"/>
        <end position="647"/>
    </location>
</feature>
<feature type="helix" evidence="3">
    <location>
        <begin position="654"/>
        <end position="661"/>
    </location>
</feature>
<feature type="strand" evidence="3">
    <location>
        <begin position="670"/>
        <end position="675"/>
    </location>
</feature>
<feature type="helix" evidence="3">
    <location>
        <begin position="680"/>
        <end position="689"/>
    </location>
</feature>
<keyword id="KW-0002">3D-structure</keyword>
<keyword id="KW-0963">Cytoplasm</keyword>
<keyword id="KW-0251">Elongation factor</keyword>
<keyword id="KW-0342">GTP-binding</keyword>
<keyword id="KW-0547">Nucleotide-binding</keyword>
<keyword id="KW-0648">Protein biosynthesis</keyword>
<keyword id="KW-1185">Reference proteome</keyword>
<dbReference type="EMBL" id="CP000253">
    <property type="protein sequence ID" value="ABD29677.1"/>
    <property type="molecule type" value="Genomic_DNA"/>
</dbReference>
<dbReference type="RefSeq" id="WP_000090315.1">
    <property type="nucleotide sequence ID" value="NZ_LS483365.1"/>
</dbReference>
<dbReference type="RefSeq" id="YP_499101.1">
    <property type="nucleotide sequence ID" value="NC_007795.1"/>
</dbReference>
<dbReference type="PDB" id="2MZW">
    <property type="method" value="NMR"/>
    <property type="chains" value="A=401-693"/>
</dbReference>
<dbReference type="PDB" id="8P2F">
    <property type="method" value="EM"/>
    <property type="resolution" value="2.44 A"/>
    <property type="chains" value="E=1-693"/>
</dbReference>
<dbReference type="PDB" id="8P2G">
    <property type="method" value="EM"/>
    <property type="resolution" value="2.02 A"/>
    <property type="chains" value="E=1-693"/>
</dbReference>
<dbReference type="PDB" id="8P2H">
    <property type="method" value="EM"/>
    <property type="resolution" value="2.49 A"/>
    <property type="chains" value="E=1-693"/>
</dbReference>
<dbReference type="PDBsum" id="2MZW"/>
<dbReference type="PDBsum" id="8P2F"/>
<dbReference type="PDBsum" id="8P2G"/>
<dbReference type="PDBsum" id="8P2H"/>
<dbReference type="EMDB" id="EMD-17363"/>
<dbReference type="EMDB" id="EMD-17364"/>
<dbReference type="EMDB" id="EMD-17365"/>
<dbReference type="SMR" id="Q2G0N1"/>
<dbReference type="DIP" id="DIP-60012N"/>
<dbReference type="IntAct" id="Q2G0N1">
    <property type="interactions" value="1"/>
</dbReference>
<dbReference type="STRING" id="93061.SAOUHSC_00529"/>
<dbReference type="PaxDb" id="1280-SAXN108_0601"/>
<dbReference type="GeneID" id="3920382"/>
<dbReference type="KEGG" id="sao:SAOUHSC_00529"/>
<dbReference type="PATRIC" id="fig|93061.5.peg.475"/>
<dbReference type="eggNOG" id="COG0480">
    <property type="taxonomic scope" value="Bacteria"/>
</dbReference>
<dbReference type="HOGENOM" id="CLU_002794_4_1_9"/>
<dbReference type="OrthoDB" id="9804431at2"/>
<dbReference type="EvolutionaryTrace" id="Q2G0N1"/>
<dbReference type="PRO" id="PR:Q2G0N1"/>
<dbReference type="Proteomes" id="UP000008816">
    <property type="component" value="Chromosome"/>
</dbReference>
<dbReference type="GO" id="GO:0005737">
    <property type="term" value="C:cytoplasm"/>
    <property type="evidence" value="ECO:0007669"/>
    <property type="project" value="UniProtKB-SubCell"/>
</dbReference>
<dbReference type="GO" id="GO:0005525">
    <property type="term" value="F:GTP binding"/>
    <property type="evidence" value="ECO:0007669"/>
    <property type="project" value="UniProtKB-UniRule"/>
</dbReference>
<dbReference type="GO" id="GO:0003924">
    <property type="term" value="F:GTPase activity"/>
    <property type="evidence" value="ECO:0007669"/>
    <property type="project" value="InterPro"/>
</dbReference>
<dbReference type="GO" id="GO:0003746">
    <property type="term" value="F:translation elongation factor activity"/>
    <property type="evidence" value="ECO:0007669"/>
    <property type="project" value="UniProtKB-UniRule"/>
</dbReference>
<dbReference type="GO" id="GO:0032790">
    <property type="term" value="P:ribosome disassembly"/>
    <property type="evidence" value="ECO:0000318"/>
    <property type="project" value="GO_Central"/>
</dbReference>
<dbReference type="CDD" id="cd01886">
    <property type="entry name" value="EF-G"/>
    <property type="match status" value="1"/>
</dbReference>
<dbReference type="CDD" id="cd16262">
    <property type="entry name" value="EFG_III"/>
    <property type="match status" value="1"/>
</dbReference>
<dbReference type="CDD" id="cd01434">
    <property type="entry name" value="EFG_mtEFG1_IV"/>
    <property type="match status" value="1"/>
</dbReference>
<dbReference type="CDD" id="cd03713">
    <property type="entry name" value="EFG_mtEFG_C"/>
    <property type="match status" value="1"/>
</dbReference>
<dbReference type="CDD" id="cd04088">
    <property type="entry name" value="EFG_mtEFG_II"/>
    <property type="match status" value="1"/>
</dbReference>
<dbReference type="FunFam" id="2.40.30.10:FF:000006">
    <property type="entry name" value="Elongation factor G"/>
    <property type="match status" value="1"/>
</dbReference>
<dbReference type="FunFam" id="3.30.230.10:FF:000003">
    <property type="entry name" value="Elongation factor G"/>
    <property type="match status" value="1"/>
</dbReference>
<dbReference type="FunFam" id="3.30.70.240:FF:000001">
    <property type="entry name" value="Elongation factor G"/>
    <property type="match status" value="1"/>
</dbReference>
<dbReference type="FunFam" id="3.30.70.870:FF:000001">
    <property type="entry name" value="Elongation factor G"/>
    <property type="match status" value="1"/>
</dbReference>
<dbReference type="FunFam" id="3.40.50.300:FF:000029">
    <property type="entry name" value="Elongation factor G"/>
    <property type="match status" value="1"/>
</dbReference>
<dbReference type="Gene3D" id="3.30.230.10">
    <property type="match status" value="1"/>
</dbReference>
<dbReference type="Gene3D" id="3.30.70.240">
    <property type="match status" value="1"/>
</dbReference>
<dbReference type="Gene3D" id="3.30.70.870">
    <property type="entry name" value="Elongation Factor G (Translational Gtpase), domain 3"/>
    <property type="match status" value="1"/>
</dbReference>
<dbReference type="Gene3D" id="3.40.50.300">
    <property type="entry name" value="P-loop containing nucleotide triphosphate hydrolases"/>
    <property type="match status" value="1"/>
</dbReference>
<dbReference type="Gene3D" id="2.40.30.10">
    <property type="entry name" value="Translation factors"/>
    <property type="match status" value="1"/>
</dbReference>
<dbReference type="HAMAP" id="MF_00054_B">
    <property type="entry name" value="EF_G_EF_2_B"/>
    <property type="match status" value="1"/>
</dbReference>
<dbReference type="InterPro" id="IPR041095">
    <property type="entry name" value="EFG_II"/>
</dbReference>
<dbReference type="InterPro" id="IPR009022">
    <property type="entry name" value="EFG_III"/>
</dbReference>
<dbReference type="InterPro" id="IPR035647">
    <property type="entry name" value="EFG_III/V"/>
</dbReference>
<dbReference type="InterPro" id="IPR047872">
    <property type="entry name" value="EFG_IV"/>
</dbReference>
<dbReference type="InterPro" id="IPR035649">
    <property type="entry name" value="EFG_V"/>
</dbReference>
<dbReference type="InterPro" id="IPR000640">
    <property type="entry name" value="EFG_V-like"/>
</dbReference>
<dbReference type="InterPro" id="IPR004161">
    <property type="entry name" value="EFTu-like_2"/>
</dbReference>
<dbReference type="InterPro" id="IPR031157">
    <property type="entry name" value="G_TR_CS"/>
</dbReference>
<dbReference type="InterPro" id="IPR027417">
    <property type="entry name" value="P-loop_NTPase"/>
</dbReference>
<dbReference type="InterPro" id="IPR020568">
    <property type="entry name" value="Ribosomal_Su5_D2-typ_SF"/>
</dbReference>
<dbReference type="InterPro" id="IPR014721">
    <property type="entry name" value="Ribsml_uS5_D2-typ_fold_subgr"/>
</dbReference>
<dbReference type="InterPro" id="IPR005225">
    <property type="entry name" value="Small_GTP-bd"/>
</dbReference>
<dbReference type="InterPro" id="IPR000795">
    <property type="entry name" value="T_Tr_GTP-bd_dom"/>
</dbReference>
<dbReference type="InterPro" id="IPR009000">
    <property type="entry name" value="Transl_B-barrel_sf"/>
</dbReference>
<dbReference type="InterPro" id="IPR004540">
    <property type="entry name" value="Transl_elong_EFG/EF2"/>
</dbReference>
<dbReference type="InterPro" id="IPR005517">
    <property type="entry name" value="Transl_elong_EFG/EF2_IV"/>
</dbReference>
<dbReference type="NCBIfam" id="TIGR00484">
    <property type="entry name" value="EF-G"/>
    <property type="match status" value="1"/>
</dbReference>
<dbReference type="NCBIfam" id="NF009379">
    <property type="entry name" value="PRK12740.1-3"/>
    <property type="match status" value="1"/>
</dbReference>
<dbReference type="NCBIfam" id="NF009381">
    <property type="entry name" value="PRK12740.1-5"/>
    <property type="match status" value="1"/>
</dbReference>
<dbReference type="NCBIfam" id="TIGR00231">
    <property type="entry name" value="small_GTP"/>
    <property type="match status" value="1"/>
</dbReference>
<dbReference type="PANTHER" id="PTHR43261:SF1">
    <property type="entry name" value="RIBOSOME-RELEASING FACTOR 2, MITOCHONDRIAL"/>
    <property type="match status" value="1"/>
</dbReference>
<dbReference type="PANTHER" id="PTHR43261">
    <property type="entry name" value="TRANSLATION ELONGATION FACTOR G-RELATED"/>
    <property type="match status" value="1"/>
</dbReference>
<dbReference type="Pfam" id="PF00679">
    <property type="entry name" value="EFG_C"/>
    <property type="match status" value="1"/>
</dbReference>
<dbReference type="Pfam" id="PF14492">
    <property type="entry name" value="EFG_III"/>
    <property type="match status" value="1"/>
</dbReference>
<dbReference type="Pfam" id="PF03764">
    <property type="entry name" value="EFG_IV"/>
    <property type="match status" value="1"/>
</dbReference>
<dbReference type="Pfam" id="PF00009">
    <property type="entry name" value="GTP_EFTU"/>
    <property type="match status" value="1"/>
</dbReference>
<dbReference type="Pfam" id="PF03144">
    <property type="entry name" value="GTP_EFTU_D2"/>
    <property type="match status" value="1"/>
</dbReference>
<dbReference type="PRINTS" id="PR00315">
    <property type="entry name" value="ELONGATNFCT"/>
</dbReference>
<dbReference type="SMART" id="SM00838">
    <property type="entry name" value="EFG_C"/>
    <property type="match status" value="1"/>
</dbReference>
<dbReference type="SMART" id="SM00889">
    <property type="entry name" value="EFG_IV"/>
    <property type="match status" value="1"/>
</dbReference>
<dbReference type="SUPFAM" id="SSF54980">
    <property type="entry name" value="EF-G C-terminal domain-like"/>
    <property type="match status" value="2"/>
</dbReference>
<dbReference type="SUPFAM" id="SSF52540">
    <property type="entry name" value="P-loop containing nucleoside triphosphate hydrolases"/>
    <property type="match status" value="1"/>
</dbReference>
<dbReference type="SUPFAM" id="SSF54211">
    <property type="entry name" value="Ribosomal protein S5 domain 2-like"/>
    <property type="match status" value="1"/>
</dbReference>
<dbReference type="SUPFAM" id="SSF50447">
    <property type="entry name" value="Translation proteins"/>
    <property type="match status" value="1"/>
</dbReference>
<dbReference type="PROSITE" id="PS00301">
    <property type="entry name" value="G_TR_1"/>
    <property type="match status" value="1"/>
</dbReference>
<dbReference type="PROSITE" id="PS51722">
    <property type="entry name" value="G_TR_2"/>
    <property type="match status" value="1"/>
</dbReference>
<name>EFG_STAA8</name>
<gene>
    <name evidence="2" type="primary">fusA</name>
    <name type="ordered locus">SAOUHSC_00529</name>
</gene>
<sequence>MAREFSLEKTRNIGIMAHIDAGKTTTTERILYYTGRIHKIGETHEGASQMDWMEQEQDRGITITSAATTAAWEGHRVNIIDTPGHVDFTVEVERSLRVLDGAVTVLDAQSGVEPQTETVWRQATTYGVPRIVFVNKMDKLGANFEYSVSTLHDRLQANAAPIQLPIGAEDEFEAIIDLVEMKCFKYTNDLGTEIEEIEIPEDHLDRAEEARASLIEAVAETSDELMEKYLGDEEISVSELKEAIRQATTNVEFYPVLCGTAFKNKGVQLMLDAVIDYLPSPLDVKPIIGHRASNPEEEVIAKADDSAEFAALAFKVMTDPYVGKLTFFRVYSGTMTSGSYVKNSTKGKRERVGRLLQMHANSRQEIDTVYSGDIAAAVGLKDTGTGDTLCGEKNDIILESMEFPEPVIHLSVEPKSKADQDKMTQALVKLQEEDPTFHAHTDEETGQVIIGGMGELHLDILVDRMKKEFNVECNVGAPMVSYRETFKSSAQVQGKFSRQSGGRGQYGDVHIEFTPNETGAGFEFENAIVGGVVPREYIPSVEAGLKDAMENGVLAGYPLIDVKAKLYDGSYHDVDSSEMAFKIAASLALKEAAKKCDPVILEPMMKVTIEMPEEYMGDIMGDVTSRRGRVDGMEPRGNAQVVNAYVPLSEMFGYATSLRSNTQGRGTYTMYFDHYAEVPKSIAEDIIKKNKGE</sequence>